<dbReference type="EMBL" id="CP000554">
    <property type="protein sequence ID" value="ABM78203.1"/>
    <property type="molecule type" value="Genomic_DNA"/>
</dbReference>
<dbReference type="RefSeq" id="WP_011130135.1">
    <property type="nucleotide sequence ID" value="NC_008820.1"/>
</dbReference>
<dbReference type="SMR" id="A2C9P3"/>
<dbReference type="STRING" id="59922.P9303_14571"/>
<dbReference type="KEGG" id="pmf:P9303_14571"/>
<dbReference type="HOGENOM" id="CLU_199882_0_0_3"/>
<dbReference type="BioCyc" id="PMAR59922:G1G80-1259-MONOMER"/>
<dbReference type="Proteomes" id="UP000002274">
    <property type="component" value="Chromosome"/>
</dbReference>
<dbReference type="GO" id="GO:0015934">
    <property type="term" value="C:large ribosomal subunit"/>
    <property type="evidence" value="ECO:0007669"/>
    <property type="project" value="InterPro"/>
</dbReference>
<dbReference type="GO" id="GO:0003735">
    <property type="term" value="F:structural constituent of ribosome"/>
    <property type="evidence" value="ECO:0007669"/>
    <property type="project" value="InterPro"/>
</dbReference>
<dbReference type="GO" id="GO:0006412">
    <property type="term" value="P:translation"/>
    <property type="evidence" value="ECO:0007669"/>
    <property type="project" value="UniProtKB-UniRule"/>
</dbReference>
<dbReference type="Gene3D" id="1.20.5.640">
    <property type="entry name" value="Single helix bin"/>
    <property type="match status" value="1"/>
</dbReference>
<dbReference type="HAMAP" id="MF_00340">
    <property type="entry name" value="Ribosomal_bL32"/>
    <property type="match status" value="1"/>
</dbReference>
<dbReference type="InterPro" id="IPR002677">
    <property type="entry name" value="Ribosomal_bL32"/>
</dbReference>
<dbReference type="InterPro" id="IPR044958">
    <property type="entry name" value="Ribosomal_bL32_plant/cyanobact"/>
</dbReference>
<dbReference type="InterPro" id="IPR011332">
    <property type="entry name" value="Ribosomal_zn-bd"/>
</dbReference>
<dbReference type="NCBIfam" id="TIGR01031">
    <property type="entry name" value="rpmF_bact"/>
    <property type="match status" value="1"/>
</dbReference>
<dbReference type="PANTHER" id="PTHR36083">
    <property type="entry name" value="50S RIBOSOMAL PROTEIN L32, CHLOROPLASTIC"/>
    <property type="match status" value="1"/>
</dbReference>
<dbReference type="PANTHER" id="PTHR36083:SF1">
    <property type="entry name" value="LARGE RIBOSOMAL SUBUNIT PROTEIN BL32C"/>
    <property type="match status" value="1"/>
</dbReference>
<dbReference type="Pfam" id="PF01783">
    <property type="entry name" value="Ribosomal_L32p"/>
    <property type="match status" value="1"/>
</dbReference>
<dbReference type="SUPFAM" id="SSF57829">
    <property type="entry name" value="Zn-binding ribosomal proteins"/>
    <property type="match status" value="1"/>
</dbReference>
<evidence type="ECO:0000255" key="1">
    <source>
        <dbReference type="HAMAP-Rule" id="MF_00340"/>
    </source>
</evidence>
<evidence type="ECO:0000305" key="2"/>
<keyword id="KW-0687">Ribonucleoprotein</keyword>
<keyword id="KW-0689">Ribosomal protein</keyword>
<accession>A2C9P3</accession>
<sequence>MAVPKKKTSKGKRNQRHAIWKAKAATAAQRALSIGKSVLSGRAQGFVYPMQESDDDES</sequence>
<protein>
    <recommendedName>
        <fullName evidence="1">Large ribosomal subunit protein bL32</fullName>
    </recommendedName>
    <alternativeName>
        <fullName evidence="2">50S ribosomal protein L32</fullName>
    </alternativeName>
</protein>
<organism>
    <name type="scientific">Prochlorococcus marinus (strain MIT 9303)</name>
    <dbReference type="NCBI Taxonomy" id="59922"/>
    <lineage>
        <taxon>Bacteria</taxon>
        <taxon>Bacillati</taxon>
        <taxon>Cyanobacteriota</taxon>
        <taxon>Cyanophyceae</taxon>
        <taxon>Synechococcales</taxon>
        <taxon>Prochlorococcaceae</taxon>
        <taxon>Prochlorococcus</taxon>
    </lineage>
</organism>
<gene>
    <name evidence="1" type="primary">rpmF</name>
    <name evidence="1" type="synonym">rpl32</name>
    <name type="ordered locus">P9303_14571</name>
</gene>
<proteinExistence type="inferred from homology"/>
<reference key="1">
    <citation type="journal article" date="2007" name="PLoS Genet.">
        <title>Patterns and implications of gene gain and loss in the evolution of Prochlorococcus.</title>
        <authorList>
            <person name="Kettler G.C."/>
            <person name="Martiny A.C."/>
            <person name="Huang K."/>
            <person name="Zucker J."/>
            <person name="Coleman M.L."/>
            <person name="Rodrigue S."/>
            <person name="Chen F."/>
            <person name="Lapidus A."/>
            <person name="Ferriera S."/>
            <person name="Johnson J."/>
            <person name="Steglich C."/>
            <person name="Church G.M."/>
            <person name="Richardson P."/>
            <person name="Chisholm S.W."/>
        </authorList>
    </citation>
    <scope>NUCLEOTIDE SEQUENCE [LARGE SCALE GENOMIC DNA]</scope>
    <source>
        <strain>MIT 9303</strain>
    </source>
</reference>
<feature type="chain" id="PRO_0000296528" description="Large ribosomal subunit protein bL32">
    <location>
        <begin position="1"/>
        <end position="58"/>
    </location>
</feature>
<comment type="similarity">
    <text evidence="1">Belongs to the bacterial ribosomal protein bL32 family.</text>
</comment>
<name>RL32_PROM3</name>